<protein>
    <recommendedName>
        <fullName evidence="1">2-succinyl-5-enolpyruvyl-6-hydroxy-3-cyclohexene-1-carboxylate synthase</fullName>
        <shortName evidence="1">SEPHCHC synthase</shortName>
        <ecNumber evidence="1">2.2.1.9</ecNumber>
    </recommendedName>
</protein>
<gene>
    <name evidence="1" type="primary">menD</name>
    <name type="ordered locus">sync_1526</name>
</gene>
<sequence>MLQTLQQQGLRHVVLCPGSRSGPLALAAAGLMRAGLITLSTAIDERSAGFYALGRSSASGVATAVITTSGTAVANLLPAAVEADRSSQPLLLISADRPLRLKNKGANQTVNQEAFLTPVCRWCGSGPLDGLSAGLDQELQALAQNAWRHLHQQPGPVHLNLPFEEPLHPDLDQQSTFWSQWNSSESVAITHNPELCKPTSHSEAPSLDPDQPGVIVAGPWRGLSATLEPYQAALIAWQQRSGWPVLADPLAAIPSNLGGVIRSWDLLLPNGLSQLPANAQVLRLGSMPASRRLEAWIANQQGPQLLITEGDPRPLDPLEIAEQWSGGLAQWWKQLNPRLRVIDATKPDIEARGGSPLQAWRTADLELQQRLYELLPGHGPANEPALMFALARLLPAELPVMLAASSPVRDWQAFAASDTGRRRCYSFRGASGIDGTLSLALGIAAELGPTVLITGDLALLHDSNGWLLASAAQQPLLVLLIDNAGGGIFEQLPIETTPRDGFNQLFAMPQQVDPLALAAAHSIPVRQLACLDDLPSALEWGLGSAGPTLLRVCTDRSSDAQLRRNLRKALQQSKSLS</sequence>
<comment type="function">
    <text evidence="1">Catalyzes the thiamine diphosphate-dependent decarboxylation of 2-oxoglutarate and the subsequent addition of the resulting succinic semialdehyde-thiamine pyrophosphate anion to isochorismate to yield 2-succinyl-5-enolpyruvyl-6-hydroxy-3-cyclohexene-1-carboxylate (SEPHCHC).</text>
</comment>
<comment type="catalytic activity">
    <reaction evidence="1">
        <text>isochorismate + 2-oxoglutarate + H(+) = 5-enolpyruvoyl-6-hydroxy-2-succinyl-cyclohex-3-ene-1-carboxylate + CO2</text>
        <dbReference type="Rhea" id="RHEA:25593"/>
        <dbReference type="ChEBI" id="CHEBI:15378"/>
        <dbReference type="ChEBI" id="CHEBI:16526"/>
        <dbReference type="ChEBI" id="CHEBI:16810"/>
        <dbReference type="ChEBI" id="CHEBI:29780"/>
        <dbReference type="ChEBI" id="CHEBI:58818"/>
        <dbReference type="EC" id="2.2.1.9"/>
    </reaction>
</comment>
<comment type="cofactor">
    <cofactor evidence="1">
        <name>Mg(2+)</name>
        <dbReference type="ChEBI" id="CHEBI:18420"/>
    </cofactor>
    <cofactor evidence="1">
        <name>Mn(2+)</name>
        <dbReference type="ChEBI" id="CHEBI:29035"/>
    </cofactor>
</comment>
<comment type="cofactor">
    <cofactor evidence="1">
        <name>thiamine diphosphate</name>
        <dbReference type="ChEBI" id="CHEBI:58937"/>
    </cofactor>
    <text evidence="1">Binds 1 thiamine pyrophosphate per subunit.</text>
</comment>
<comment type="pathway">
    <text evidence="1">Quinol/quinone metabolism; 1,4-dihydroxy-2-naphthoate biosynthesis; 1,4-dihydroxy-2-naphthoate from chorismate: step 2/7.</text>
</comment>
<comment type="pathway">
    <text evidence="1">Cofactor biosynthesis; phylloquinone biosynthesis.</text>
</comment>
<comment type="subunit">
    <text evidence="1">Homodimer.</text>
</comment>
<comment type="similarity">
    <text evidence="1">Belongs to the TPP enzyme family. MenD subfamily.</text>
</comment>
<evidence type="ECO:0000255" key="1">
    <source>
        <dbReference type="HAMAP-Rule" id="MF_01659"/>
    </source>
</evidence>
<reference key="1">
    <citation type="journal article" date="2006" name="Proc. Natl. Acad. Sci. U.S.A.">
        <title>Genome sequence of Synechococcus CC9311: insights into adaptation to a coastal environment.</title>
        <authorList>
            <person name="Palenik B."/>
            <person name="Ren Q."/>
            <person name="Dupont C.L."/>
            <person name="Myers G.S."/>
            <person name="Heidelberg J.F."/>
            <person name="Badger J.H."/>
            <person name="Madupu R."/>
            <person name="Nelson W.C."/>
            <person name="Brinkac L.M."/>
            <person name="Dodson R.J."/>
            <person name="Durkin A.S."/>
            <person name="Daugherty S.C."/>
            <person name="Sullivan S.A."/>
            <person name="Khouri H."/>
            <person name="Mohamoud Y."/>
            <person name="Halpin R."/>
            <person name="Paulsen I.T."/>
        </authorList>
    </citation>
    <scope>NUCLEOTIDE SEQUENCE [LARGE SCALE GENOMIC DNA]</scope>
    <source>
        <strain>CC9311</strain>
    </source>
</reference>
<dbReference type="EC" id="2.2.1.9" evidence="1"/>
<dbReference type="EMBL" id="CP000435">
    <property type="protein sequence ID" value="ABI47088.1"/>
    <property type="molecule type" value="Genomic_DNA"/>
</dbReference>
<dbReference type="RefSeq" id="WP_011619448.1">
    <property type="nucleotide sequence ID" value="NC_008319.1"/>
</dbReference>
<dbReference type="SMR" id="Q0I9Z1"/>
<dbReference type="STRING" id="64471.sync_1526"/>
<dbReference type="KEGG" id="syg:sync_1526"/>
<dbReference type="eggNOG" id="COG1165">
    <property type="taxonomic scope" value="Bacteria"/>
</dbReference>
<dbReference type="HOGENOM" id="CLU_006051_3_0_3"/>
<dbReference type="OrthoDB" id="9791859at2"/>
<dbReference type="UniPathway" id="UPA00995"/>
<dbReference type="UniPathway" id="UPA01057">
    <property type="reaction ID" value="UER00164"/>
</dbReference>
<dbReference type="Proteomes" id="UP000001961">
    <property type="component" value="Chromosome"/>
</dbReference>
<dbReference type="GO" id="GO:0070204">
    <property type="term" value="F:2-succinyl-5-enolpyruvyl-6-hydroxy-3-cyclohexene-1-carboxylic-acid synthase activity"/>
    <property type="evidence" value="ECO:0007669"/>
    <property type="project" value="UniProtKB-UniRule"/>
</dbReference>
<dbReference type="GO" id="GO:0000287">
    <property type="term" value="F:magnesium ion binding"/>
    <property type="evidence" value="ECO:0007669"/>
    <property type="project" value="UniProtKB-UniRule"/>
</dbReference>
<dbReference type="GO" id="GO:0030145">
    <property type="term" value="F:manganese ion binding"/>
    <property type="evidence" value="ECO:0007669"/>
    <property type="project" value="UniProtKB-UniRule"/>
</dbReference>
<dbReference type="GO" id="GO:0030976">
    <property type="term" value="F:thiamine pyrophosphate binding"/>
    <property type="evidence" value="ECO:0007669"/>
    <property type="project" value="UniProtKB-UniRule"/>
</dbReference>
<dbReference type="GO" id="GO:0009234">
    <property type="term" value="P:menaquinone biosynthetic process"/>
    <property type="evidence" value="ECO:0007669"/>
    <property type="project" value="InterPro"/>
</dbReference>
<dbReference type="GO" id="GO:0042372">
    <property type="term" value="P:phylloquinone biosynthetic process"/>
    <property type="evidence" value="ECO:0007669"/>
    <property type="project" value="UniProtKB-UniRule"/>
</dbReference>
<dbReference type="CDD" id="cd07037">
    <property type="entry name" value="TPP_PYR_MenD"/>
    <property type="match status" value="1"/>
</dbReference>
<dbReference type="CDD" id="cd02009">
    <property type="entry name" value="TPP_SHCHC_synthase"/>
    <property type="match status" value="1"/>
</dbReference>
<dbReference type="Gene3D" id="3.40.50.970">
    <property type="match status" value="2"/>
</dbReference>
<dbReference type="Gene3D" id="3.40.50.1220">
    <property type="entry name" value="TPP-binding domain"/>
    <property type="match status" value="1"/>
</dbReference>
<dbReference type="HAMAP" id="MF_01659">
    <property type="entry name" value="MenD"/>
    <property type="match status" value="1"/>
</dbReference>
<dbReference type="InterPro" id="IPR004433">
    <property type="entry name" value="MenaQ_synth_MenD"/>
</dbReference>
<dbReference type="InterPro" id="IPR032264">
    <property type="entry name" value="MenD_middle"/>
</dbReference>
<dbReference type="InterPro" id="IPR029061">
    <property type="entry name" value="THDP-binding"/>
</dbReference>
<dbReference type="InterPro" id="IPR012001">
    <property type="entry name" value="Thiamin_PyroP_enz_TPP-bd_dom"/>
</dbReference>
<dbReference type="InterPro" id="IPR011766">
    <property type="entry name" value="TPP_enzyme_TPP-bd"/>
</dbReference>
<dbReference type="NCBIfam" id="TIGR00173">
    <property type="entry name" value="menD"/>
    <property type="match status" value="1"/>
</dbReference>
<dbReference type="PANTHER" id="PTHR42916">
    <property type="entry name" value="2-SUCCINYL-5-ENOLPYRUVYL-6-HYDROXY-3-CYCLOHEXENE-1-CARBOXYLATE SYNTHASE"/>
    <property type="match status" value="1"/>
</dbReference>
<dbReference type="PANTHER" id="PTHR42916:SF1">
    <property type="entry name" value="PROTEIN PHYLLO, CHLOROPLASTIC"/>
    <property type="match status" value="1"/>
</dbReference>
<dbReference type="Pfam" id="PF02775">
    <property type="entry name" value="TPP_enzyme_C"/>
    <property type="match status" value="1"/>
</dbReference>
<dbReference type="Pfam" id="PF16582">
    <property type="entry name" value="TPP_enzyme_M_2"/>
    <property type="match status" value="1"/>
</dbReference>
<dbReference type="Pfam" id="PF02776">
    <property type="entry name" value="TPP_enzyme_N"/>
    <property type="match status" value="1"/>
</dbReference>
<dbReference type="PIRSF" id="PIRSF004983">
    <property type="entry name" value="MenD"/>
    <property type="match status" value="1"/>
</dbReference>
<dbReference type="SUPFAM" id="SSF52518">
    <property type="entry name" value="Thiamin diphosphate-binding fold (THDP-binding)"/>
    <property type="match status" value="2"/>
</dbReference>
<name>MEND_SYNS3</name>
<organism>
    <name type="scientific">Synechococcus sp. (strain CC9311)</name>
    <dbReference type="NCBI Taxonomy" id="64471"/>
    <lineage>
        <taxon>Bacteria</taxon>
        <taxon>Bacillati</taxon>
        <taxon>Cyanobacteriota</taxon>
        <taxon>Cyanophyceae</taxon>
        <taxon>Synechococcales</taxon>
        <taxon>Synechococcaceae</taxon>
        <taxon>Synechococcus</taxon>
    </lineage>
</organism>
<proteinExistence type="inferred from homology"/>
<feature type="chain" id="PRO_0000341869" description="2-succinyl-5-enolpyruvyl-6-hydroxy-3-cyclohexene-1-carboxylate synthase">
    <location>
        <begin position="1"/>
        <end position="577"/>
    </location>
</feature>
<keyword id="KW-0460">Magnesium</keyword>
<keyword id="KW-0464">Manganese</keyword>
<keyword id="KW-0479">Metal-binding</keyword>
<keyword id="KW-1185">Reference proteome</keyword>
<keyword id="KW-0786">Thiamine pyrophosphate</keyword>
<keyword id="KW-0808">Transferase</keyword>
<accession>Q0I9Z1</accession>